<proteinExistence type="evidence at transcript level"/>
<protein>
    <recommendedName>
        <fullName evidence="14">Ferrochelatase-1, chloroplastic/mitochondrial</fullName>
        <shortName evidence="10">AtFC1</shortName>
        <ecNumber evidence="14">4.98.1.1</ecNumber>
    </recommendedName>
    <alternativeName>
        <fullName evidence="13">Ferrochelatase-I</fullName>
        <shortName evidence="9">AtFC-I</shortName>
    </alternativeName>
    <alternativeName>
        <fullName evidence="14">Heme synthase 1</fullName>
    </alternativeName>
    <alternativeName>
        <fullName evidence="14">Protoheme ferro-lyase 1</fullName>
    </alternativeName>
</protein>
<name>HEMH1_ARATH</name>
<sequence length="466" mass="52033">MQATALSSGFNPLTKRKDHRFPRSCSQRNSLSLIQCDIKERSFGESMTITNRGLSFKTNVFEQARSVTGDCSYDETSAKARSHVVAEDKIGVLLLNLGGPETLNDVQPFLYNLFADPDIIRLPRPFQFLQGTIAKFISVVRAPKSKEGYAAIGGGSPLRKITDEQADAIKMSLQAKNIAANVYVGMRYWYPFTEEAVQQIKKDKITRLVVLPLYPQYSISTTGSSIRVLQDLFRKDPYLAGVPVAIIKSWYQRRGYVNSMADLIEKELQTFSDPKEVMIFFSAHGVPVSYVENAGDPYQKQMEECIDLIMEELKARGVLNDHKLAYQSRVGPVQWLKPYTDEVLVDLGKSGVKSLLAVPVSFVSEHIETLEEIDMEYRELALESGVENWGRVPALGLTPSFITDLADAVIESLPSAEAMSNPNAVVDSEDSESSDAFSYIVKMFFGSILAFVLLLSPKMFHAFRNL</sequence>
<keyword id="KW-0150">Chloroplast</keyword>
<keyword id="KW-0350">Heme biosynthesis</keyword>
<keyword id="KW-0408">Iron</keyword>
<keyword id="KW-0456">Lyase</keyword>
<keyword id="KW-0472">Membrane</keyword>
<keyword id="KW-0496">Mitochondrion</keyword>
<keyword id="KW-0934">Plastid</keyword>
<keyword id="KW-0627">Porphyrin biosynthesis</keyword>
<keyword id="KW-1185">Reference proteome</keyword>
<keyword id="KW-0793">Thylakoid</keyword>
<keyword id="KW-0809">Transit peptide</keyword>
<reference key="1">
    <citation type="journal article" date="1994" name="J. Biol. Chem.">
        <title>Isolation of a cDNA encoding chloroplast ferrochelatase from Arabidopsis thaliana by functional complementation of a yeast mutant.</title>
        <authorList>
            <person name="Smith A.G."/>
            <person name="Santana M.A."/>
            <person name="Wallace-Cook A.D.M."/>
            <person name="Roper J.M."/>
            <person name="Labbe-Bois R."/>
        </authorList>
    </citation>
    <scope>NUCLEOTIDE SEQUENCE [MRNA]</scope>
    <source>
        <strain>cv. Landsberg erecta</strain>
        <tissue>Seedling</tissue>
    </source>
</reference>
<reference key="2">
    <citation type="journal article" date="1998" name="Plant J.">
        <title>Two different genes encode ferrochelatase in Arabidopsis: mapping, expression and subcellular targeting of the precursor proteins.</title>
        <authorList>
            <person name="Chow K.-S."/>
            <person name="Singh D.P."/>
            <person name="Walker A."/>
            <person name="Smith A.G."/>
        </authorList>
    </citation>
    <scope>NUCLEOTIDE SEQUENCE [GENOMIC DNA]</scope>
    <source>
        <strain>cv. Landsberg erecta</strain>
    </source>
</reference>
<reference key="3">
    <citation type="journal article" date="2000" name="Nature">
        <title>Sequence and analysis of chromosome 5 of the plant Arabidopsis thaliana.</title>
        <authorList>
            <person name="Tabata S."/>
            <person name="Kaneko T."/>
            <person name="Nakamura Y."/>
            <person name="Kotani H."/>
            <person name="Kato T."/>
            <person name="Asamizu E."/>
            <person name="Miyajima N."/>
            <person name="Sasamoto S."/>
            <person name="Kimura T."/>
            <person name="Hosouchi T."/>
            <person name="Kawashima K."/>
            <person name="Kohara M."/>
            <person name="Matsumoto M."/>
            <person name="Matsuno A."/>
            <person name="Muraki A."/>
            <person name="Nakayama S."/>
            <person name="Nakazaki N."/>
            <person name="Naruo K."/>
            <person name="Okumura S."/>
            <person name="Shinpo S."/>
            <person name="Takeuchi C."/>
            <person name="Wada T."/>
            <person name="Watanabe A."/>
            <person name="Yamada M."/>
            <person name="Yasuda M."/>
            <person name="Sato S."/>
            <person name="de la Bastide M."/>
            <person name="Huang E."/>
            <person name="Spiegel L."/>
            <person name="Gnoj L."/>
            <person name="O'Shaughnessy A."/>
            <person name="Preston R."/>
            <person name="Habermann K."/>
            <person name="Murray J."/>
            <person name="Johnson D."/>
            <person name="Rohlfing T."/>
            <person name="Nelson J."/>
            <person name="Stoneking T."/>
            <person name="Pepin K."/>
            <person name="Spieth J."/>
            <person name="Sekhon M."/>
            <person name="Armstrong J."/>
            <person name="Becker M."/>
            <person name="Belter E."/>
            <person name="Cordum H."/>
            <person name="Cordes M."/>
            <person name="Courtney L."/>
            <person name="Courtney W."/>
            <person name="Dante M."/>
            <person name="Du H."/>
            <person name="Edwards J."/>
            <person name="Fryman J."/>
            <person name="Haakensen B."/>
            <person name="Lamar E."/>
            <person name="Latreille P."/>
            <person name="Leonard S."/>
            <person name="Meyer R."/>
            <person name="Mulvaney E."/>
            <person name="Ozersky P."/>
            <person name="Riley A."/>
            <person name="Strowmatt C."/>
            <person name="Wagner-McPherson C."/>
            <person name="Wollam A."/>
            <person name="Yoakum M."/>
            <person name="Bell M."/>
            <person name="Dedhia N."/>
            <person name="Parnell L."/>
            <person name="Shah R."/>
            <person name="Rodriguez M."/>
            <person name="Hoon See L."/>
            <person name="Vil D."/>
            <person name="Baker J."/>
            <person name="Kirchoff K."/>
            <person name="Toth K."/>
            <person name="King L."/>
            <person name="Bahret A."/>
            <person name="Miller B."/>
            <person name="Marra M.A."/>
            <person name="Martienssen R."/>
            <person name="McCombie W.R."/>
            <person name="Wilson R.K."/>
            <person name="Murphy G."/>
            <person name="Bancroft I."/>
            <person name="Volckaert G."/>
            <person name="Wambutt R."/>
            <person name="Duesterhoeft A."/>
            <person name="Stiekema W."/>
            <person name="Pohl T."/>
            <person name="Entian K.-D."/>
            <person name="Terryn N."/>
            <person name="Hartley N."/>
            <person name="Bent E."/>
            <person name="Johnson S."/>
            <person name="Langham S.-A."/>
            <person name="McCullagh B."/>
            <person name="Robben J."/>
            <person name="Grymonprez B."/>
            <person name="Zimmermann W."/>
            <person name="Ramsperger U."/>
            <person name="Wedler H."/>
            <person name="Balke K."/>
            <person name="Wedler E."/>
            <person name="Peters S."/>
            <person name="van Staveren M."/>
            <person name="Dirkse W."/>
            <person name="Mooijman P."/>
            <person name="Klein Lankhorst R."/>
            <person name="Weitzenegger T."/>
            <person name="Bothe G."/>
            <person name="Rose M."/>
            <person name="Hauf J."/>
            <person name="Berneiser S."/>
            <person name="Hempel S."/>
            <person name="Feldpausch M."/>
            <person name="Lamberth S."/>
            <person name="Villarroel R."/>
            <person name="Gielen J."/>
            <person name="Ardiles W."/>
            <person name="Bents O."/>
            <person name="Lemcke K."/>
            <person name="Kolesov G."/>
            <person name="Mayer K.F.X."/>
            <person name="Rudd S."/>
            <person name="Schoof H."/>
            <person name="Schueller C."/>
            <person name="Zaccaria P."/>
            <person name="Mewes H.-W."/>
            <person name="Bevan M."/>
            <person name="Fransz P.F."/>
        </authorList>
    </citation>
    <scope>NUCLEOTIDE SEQUENCE [LARGE SCALE GENOMIC DNA]</scope>
    <source>
        <strain>cv. Columbia</strain>
    </source>
</reference>
<reference key="4">
    <citation type="journal article" date="2017" name="Plant J.">
        <title>Araport11: a complete reannotation of the Arabidopsis thaliana reference genome.</title>
        <authorList>
            <person name="Cheng C.Y."/>
            <person name="Krishnakumar V."/>
            <person name="Chan A.P."/>
            <person name="Thibaud-Nissen F."/>
            <person name="Schobel S."/>
            <person name="Town C.D."/>
        </authorList>
    </citation>
    <scope>GENOME REANNOTATION</scope>
    <source>
        <strain>cv. Columbia</strain>
    </source>
</reference>
<reference key="5">
    <citation type="journal article" date="2009" name="DNA Res.">
        <title>Analysis of multiple occurrences of alternative splicing events in Arabidopsis thaliana using novel sequenced full-length cDNAs.</title>
        <authorList>
            <person name="Iida K."/>
            <person name="Fukami-Kobayashi K."/>
            <person name="Toyoda A."/>
            <person name="Sakaki Y."/>
            <person name="Kobayashi M."/>
            <person name="Seki M."/>
            <person name="Shinozaki K."/>
        </authorList>
    </citation>
    <scope>NUCLEOTIDE SEQUENCE [LARGE SCALE MRNA]</scope>
    <source>
        <strain>cv. Columbia</strain>
    </source>
</reference>
<reference key="6">
    <citation type="submission" date="2006-07" db="EMBL/GenBank/DDBJ databases">
        <title>Large-scale analysis of RIKEN Arabidopsis full-length (RAFL) cDNAs.</title>
        <authorList>
            <person name="Totoki Y."/>
            <person name="Seki M."/>
            <person name="Ishida J."/>
            <person name="Nakajima M."/>
            <person name="Enju A."/>
            <person name="Kamiya A."/>
            <person name="Narusaka M."/>
            <person name="Shin-i T."/>
            <person name="Nakagawa M."/>
            <person name="Sakamoto N."/>
            <person name="Oishi K."/>
            <person name="Kohara Y."/>
            <person name="Kobayashi M."/>
            <person name="Toyoda A."/>
            <person name="Sakaki Y."/>
            <person name="Sakurai T."/>
            <person name="Iida K."/>
            <person name="Akiyama K."/>
            <person name="Satou M."/>
            <person name="Toyoda T."/>
            <person name="Konagaya A."/>
            <person name="Carninci P."/>
            <person name="Kawai J."/>
            <person name="Hayashizaki Y."/>
            <person name="Shinozaki K."/>
        </authorList>
    </citation>
    <scope>NUCLEOTIDE SEQUENCE [LARGE SCALE MRNA]</scope>
    <source>
        <strain>cv. Columbia</strain>
    </source>
</reference>
<reference key="7">
    <citation type="journal article" date="1997" name="Eur. J. Biochem.">
        <title>Molecular localisation of ferrochelatase in higher plant chloroplasts.</title>
        <authorList>
            <person name="Roper J.M."/>
            <person name="Smith A.G."/>
        </authorList>
    </citation>
    <scope>SUBCELLULAR LOCATION</scope>
</reference>
<reference key="8">
    <citation type="journal article" date="1997" name="J. Biol. Chem.">
        <title>A single precursor protein for ferrochelatase-I from Arabidopsis is imported in vitro into both chloroplasts and mitochondria.</title>
        <authorList>
            <person name="Chow K.-S."/>
            <person name="Singh D.P."/>
            <person name="Roper J.M."/>
            <person name="Smith A.G."/>
        </authorList>
    </citation>
    <scope>SUBCELLULAR LOCATION</scope>
</reference>
<reference key="9">
    <citation type="journal article" date="2001" name="FEBS Lett.">
        <title>Arabidopsis thaliana ferrochelatase-I and -II are not imported into Arabidopsis mitochondria.</title>
        <authorList>
            <person name="Lister R."/>
            <person name="Chew O."/>
            <person name="Rudhe C."/>
            <person name="Lee M.N."/>
            <person name="Whelan J."/>
        </authorList>
    </citation>
    <scope>SUBCELLULAR LOCATION</scope>
</reference>
<reference key="10">
    <citation type="journal article" date="2002" name="Plant Mol. Biol.">
        <title>Expression analysis of the two ferrochelatase genes in Arabidopsis in different tissues and under stress conditions reveals their different roles in haem biosynthesis.</title>
        <authorList>
            <person name="Singh D.P."/>
            <person name="Cornah J.E."/>
            <person name="Hadingham S."/>
            <person name="Smith A.G."/>
        </authorList>
    </citation>
    <scope>TISSUE SPECIFICITY</scope>
    <scope>INDUCTION</scope>
</reference>
<reference key="11">
    <citation type="journal article" date="2007" name="Plant Physiol.">
        <title>Induction of isoforms of tetrapyrrole biosynthetic enzymes, AtHEMA2 and AtFC1, under stress conditions and their physiological functions in Arabidopsis.</title>
        <authorList>
            <person name="Nagai S."/>
            <person name="Koide M."/>
            <person name="Takahashi S."/>
            <person name="Kikuta A."/>
            <person name="Aono M."/>
            <person name="Sasaki-Sekimoto Y."/>
            <person name="Ohta H."/>
            <person name="Takamiya K."/>
            <person name="Masuda T."/>
        </authorList>
    </citation>
    <scope>FUNCTION</scope>
    <scope>INDUCTION BY WOUNDING AND REACTIVE OXYGEN SPECIES</scope>
    <scope>TISSUE SPECIFICITY</scope>
    <scope>DISRUPTION PHENOTYPE</scope>
</reference>
<reference key="12">
    <citation type="journal article" date="2011" name="Curr. Biol.">
        <title>Heme synthesis by plastid ferrochelatase I regulates nuclear gene expression in plants.</title>
        <authorList>
            <person name="Woodson J.D."/>
            <person name="Perez-Ruiz J.M."/>
            <person name="Chory J."/>
        </authorList>
    </citation>
    <scope>FUNCTION</scope>
</reference>
<reference key="13">
    <citation type="journal article" date="2015" name="Plant Cell Environ.">
        <title>Functional characterization of the two ferrochelatases in Arabidopsis thaliana.</title>
        <authorList>
            <person name="Scharfenberg M."/>
            <person name="Mittermayr L."/>
            <person name="von Roepenack-Lahaye E."/>
            <person name="Schlicke H."/>
            <person name="Grimm B."/>
            <person name="Leister D."/>
            <person name="Kleine T."/>
        </authorList>
    </citation>
    <scope>FUNCTION</scope>
</reference>
<feature type="transit peptide" description="Chloroplast and mitochondrion" evidence="1">
    <location>
        <begin position="1"/>
        <end position="35"/>
    </location>
</feature>
<feature type="chain" id="PRO_0000008880" description="Ferrochelatase-1, chloroplastic/mitochondrial">
    <location>
        <begin position="36"/>
        <end position="466"/>
    </location>
</feature>
<feature type="region of interest" description="Disordered" evidence="2">
    <location>
        <begin position="1"/>
        <end position="23"/>
    </location>
</feature>
<feature type="compositionally biased region" description="Polar residues" evidence="2">
    <location>
        <begin position="1"/>
        <end position="11"/>
    </location>
</feature>
<feature type="sequence conflict" description="In Ref. 5; BAH56957." evidence="14" ref="5">
    <original>T</original>
    <variation>M</variation>
    <location>
        <position position="58"/>
    </location>
</feature>
<evidence type="ECO:0000255" key="1"/>
<evidence type="ECO:0000256" key="2">
    <source>
        <dbReference type="SAM" id="MobiDB-lite"/>
    </source>
</evidence>
<evidence type="ECO:0000269" key="3">
    <source>
    </source>
</evidence>
<evidence type="ECO:0000269" key="4">
    <source>
    </source>
</evidence>
<evidence type="ECO:0000269" key="5">
    <source>
    </source>
</evidence>
<evidence type="ECO:0000269" key="6">
    <source>
    </source>
</evidence>
<evidence type="ECO:0000269" key="7">
    <source>
    </source>
</evidence>
<evidence type="ECO:0000269" key="8">
    <source>
    </source>
</evidence>
<evidence type="ECO:0000303" key="9">
    <source>
    </source>
</evidence>
<evidence type="ECO:0000303" key="10">
    <source>
    </source>
</evidence>
<evidence type="ECO:0000303" key="11">
    <source>
    </source>
</evidence>
<evidence type="ECO:0000303" key="12">
    <source>
    </source>
</evidence>
<evidence type="ECO:0000303" key="13">
    <source>
    </source>
</evidence>
<evidence type="ECO:0000305" key="14"/>
<evidence type="ECO:0000305" key="15">
    <source>
    </source>
</evidence>
<evidence type="ECO:0000305" key="16">
    <source>
    </source>
</evidence>
<evidence type="ECO:0000305" key="17">
    <source>
    </source>
</evidence>
<dbReference type="EC" id="4.98.1.1" evidence="14"/>
<dbReference type="EMBL" id="X73417">
    <property type="protein sequence ID" value="CAA51819.1"/>
    <property type="molecule type" value="mRNA"/>
</dbReference>
<dbReference type="EMBL" id="Y13382">
    <property type="protein sequence ID" value="CAA73809.1"/>
    <property type="molecule type" value="Genomic_DNA"/>
</dbReference>
<dbReference type="EMBL" id="AF149413">
    <property type="protein sequence ID" value="AAD40138.1"/>
    <property type="molecule type" value="Genomic_DNA"/>
</dbReference>
<dbReference type="EMBL" id="CP002688">
    <property type="protein sequence ID" value="AED93514.1"/>
    <property type="molecule type" value="Genomic_DNA"/>
</dbReference>
<dbReference type="EMBL" id="CP002688">
    <property type="protein sequence ID" value="AED93515.1"/>
    <property type="molecule type" value="Genomic_DNA"/>
</dbReference>
<dbReference type="EMBL" id="AK318842">
    <property type="protein sequence ID" value="BAH56957.1"/>
    <property type="molecule type" value="mRNA"/>
</dbReference>
<dbReference type="EMBL" id="AK226466">
    <property type="protein sequence ID" value="BAE98608.1"/>
    <property type="molecule type" value="mRNA"/>
</dbReference>
<dbReference type="PIR" id="A54125">
    <property type="entry name" value="A54125"/>
</dbReference>
<dbReference type="RefSeq" id="NP_001031941.1">
    <property type="nucleotide sequence ID" value="NM_001036864.1"/>
</dbReference>
<dbReference type="RefSeq" id="NP_197975.3">
    <property type="nucleotide sequence ID" value="NM_122504.5"/>
</dbReference>
<dbReference type="SMR" id="P42043"/>
<dbReference type="FunCoup" id="P42043">
    <property type="interactions" value="3210"/>
</dbReference>
<dbReference type="STRING" id="3702.P42043"/>
<dbReference type="PaxDb" id="3702-AT5G26030.1"/>
<dbReference type="ProteomicsDB" id="230387"/>
<dbReference type="EnsemblPlants" id="AT5G26030.1">
    <property type="protein sequence ID" value="AT5G26030.1"/>
    <property type="gene ID" value="AT5G26030"/>
</dbReference>
<dbReference type="EnsemblPlants" id="AT5G26030.2">
    <property type="protein sequence ID" value="AT5G26030.2"/>
    <property type="gene ID" value="AT5G26030"/>
</dbReference>
<dbReference type="GeneID" id="832672"/>
<dbReference type="Gramene" id="AT5G26030.1">
    <property type="protein sequence ID" value="AT5G26030.1"/>
    <property type="gene ID" value="AT5G26030"/>
</dbReference>
<dbReference type="Gramene" id="AT5G26030.2">
    <property type="protein sequence ID" value="AT5G26030.2"/>
    <property type="gene ID" value="AT5G26030"/>
</dbReference>
<dbReference type="KEGG" id="ath:AT5G26030"/>
<dbReference type="Araport" id="AT5G26030"/>
<dbReference type="TAIR" id="AT5G26030">
    <property type="gene designation" value="FC1"/>
</dbReference>
<dbReference type="eggNOG" id="KOG1321">
    <property type="taxonomic scope" value="Eukaryota"/>
</dbReference>
<dbReference type="HOGENOM" id="CLU_018884_4_2_1"/>
<dbReference type="InParanoid" id="P42043"/>
<dbReference type="OMA" id="DPYHCEC"/>
<dbReference type="PhylomeDB" id="P42043"/>
<dbReference type="BioCyc" id="ARA:AT5G26030-MONOMER"/>
<dbReference type="BRENDA" id="4.99.1.1">
    <property type="organism ID" value="399"/>
</dbReference>
<dbReference type="UniPathway" id="UPA00252">
    <property type="reaction ID" value="UER00325"/>
</dbReference>
<dbReference type="CD-CODE" id="4299E36E">
    <property type="entry name" value="Nucleolus"/>
</dbReference>
<dbReference type="PRO" id="PR:P42043"/>
<dbReference type="Proteomes" id="UP000006548">
    <property type="component" value="Chromosome 5"/>
</dbReference>
<dbReference type="ExpressionAtlas" id="P42043">
    <property type="expression patterns" value="baseline and differential"/>
</dbReference>
<dbReference type="GO" id="GO:0009507">
    <property type="term" value="C:chloroplast"/>
    <property type="evidence" value="ECO:0000314"/>
    <property type="project" value="TAIR"/>
</dbReference>
<dbReference type="GO" id="GO:0031969">
    <property type="term" value="C:chloroplast membrane"/>
    <property type="evidence" value="ECO:0007669"/>
    <property type="project" value="UniProtKB-SubCell"/>
</dbReference>
<dbReference type="GO" id="GO:0009535">
    <property type="term" value="C:chloroplast thylakoid membrane"/>
    <property type="evidence" value="ECO:0007669"/>
    <property type="project" value="UniProtKB-SubCell"/>
</dbReference>
<dbReference type="GO" id="GO:0005739">
    <property type="term" value="C:mitochondrion"/>
    <property type="evidence" value="ECO:0000314"/>
    <property type="project" value="TAIR"/>
</dbReference>
<dbReference type="GO" id="GO:0009536">
    <property type="term" value="C:plastid"/>
    <property type="evidence" value="ECO:0007005"/>
    <property type="project" value="TAIR"/>
</dbReference>
<dbReference type="GO" id="GO:0004325">
    <property type="term" value="F:ferrochelatase activity"/>
    <property type="evidence" value="ECO:0000316"/>
    <property type="project" value="TAIR"/>
</dbReference>
<dbReference type="GO" id="GO:0006783">
    <property type="term" value="P:heme biosynthetic process"/>
    <property type="evidence" value="ECO:0000315"/>
    <property type="project" value="TAIR"/>
</dbReference>
<dbReference type="GO" id="GO:0006979">
    <property type="term" value="P:response to oxidative stress"/>
    <property type="evidence" value="ECO:0000270"/>
    <property type="project" value="TAIR"/>
</dbReference>
<dbReference type="GO" id="GO:0033014">
    <property type="term" value="P:tetrapyrrole biosynthetic process"/>
    <property type="evidence" value="ECO:0000315"/>
    <property type="project" value="TAIR"/>
</dbReference>
<dbReference type="CDD" id="cd00419">
    <property type="entry name" value="Ferrochelatase_C"/>
    <property type="match status" value="1"/>
</dbReference>
<dbReference type="CDD" id="cd03411">
    <property type="entry name" value="Ferrochelatase_N"/>
    <property type="match status" value="1"/>
</dbReference>
<dbReference type="FunFam" id="3.40.50.1400:FF:000006">
    <property type="entry name" value="Ferrochelatase"/>
    <property type="match status" value="1"/>
</dbReference>
<dbReference type="Gene3D" id="3.40.50.1400">
    <property type="match status" value="2"/>
</dbReference>
<dbReference type="HAMAP" id="MF_00323">
    <property type="entry name" value="Ferrochelatase"/>
    <property type="match status" value="1"/>
</dbReference>
<dbReference type="InterPro" id="IPR001015">
    <property type="entry name" value="Ferrochelatase"/>
</dbReference>
<dbReference type="InterPro" id="IPR019772">
    <property type="entry name" value="Ferrochelatase_AS"/>
</dbReference>
<dbReference type="InterPro" id="IPR033644">
    <property type="entry name" value="Ferrochelatase_C"/>
</dbReference>
<dbReference type="InterPro" id="IPR033659">
    <property type="entry name" value="Ferrochelatase_N"/>
</dbReference>
<dbReference type="NCBIfam" id="TIGR00109">
    <property type="entry name" value="hemH"/>
    <property type="match status" value="1"/>
</dbReference>
<dbReference type="PANTHER" id="PTHR11108">
    <property type="entry name" value="FERROCHELATASE"/>
    <property type="match status" value="1"/>
</dbReference>
<dbReference type="PANTHER" id="PTHR11108:SF4">
    <property type="entry name" value="FERROCHELATASE-1, CHLOROPLASTIC_MITOCHONDRIAL"/>
    <property type="match status" value="1"/>
</dbReference>
<dbReference type="Pfam" id="PF00762">
    <property type="entry name" value="Ferrochelatase"/>
    <property type="match status" value="1"/>
</dbReference>
<dbReference type="SUPFAM" id="SSF53800">
    <property type="entry name" value="Chelatase"/>
    <property type="match status" value="1"/>
</dbReference>
<dbReference type="PROSITE" id="PS00534">
    <property type="entry name" value="FERROCHELATASE"/>
    <property type="match status" value="1"/>
</dbReference>
<organism>
    <name type="scientific">Arabidopsis thaliana</name>
    <name type="common">Mouse-ear cress</name>
    <dbReference type="NCBI Taxonomy" id="3702"/>
    <lineage>
        <taxon>Eukaryota</taxon>
        <taxon>Viridiplantae</taxon>
        <taxon>Streptophyta</taxon>
        <taxon>Embryophyta</taxon>
        <taxon>Tracheophyta</taxon>
        <taxon>Spermatophyta</taxon>
        <taxon>Magnoliopsida</taxon>
        <taxon>eudicotyledons</taxon>
        <taxon>Gunneridae</taxon>
        <taxon>Pentapetalae</taxon>
        <taxon>rosids</taxon>
        <taxon>malvids</taxon>
        <taxon>Brassicales</taxon>
        <taxon>Brassicaceae</taxon>
        <taxon>Camelineae</taxon>
        <taxon>Arabidopsis</taxon>
    </lineage>
</organism>
<comment type="function">
    <text evidence="4 5 6">Catalyzes the last step of heme biosynthesis by inserting ferrous iron into protoporphyrin IX to produce protoheme (PubMed:17416636, PubMed:24329537). Produces heme for photosynthetic cytochromes, but does not seem to be involved in stress responses (PubMed:24329537). May be involved in wound-induced supply of heme to defensive hemoproteins outside plastids (PubMed:17416636). Regulates the expression of photosynthesis-associated nuclear genes in undeveloped chloroplasts through production of heme (PubMed:21565502).</text>
</comment>
<comment type="catalytic activity">
    <reaction evidence="14">
        <text>heme b + 2 H(+) = protoporphyrin IX + Fe(2+)</text>
        <dbReference type="Rhea" id="RHEA:22584"/>
        <dbReference type="ChEBI" id="CHEBI:15378"/>
        <dbReference type="ChEBI" id="CHEBI:29033"/>
        <dbReference type="ChEBI" id="CHEBI:57306"/>
        <dbReference type="ChEBI" id="CHEBI:60344"/>
        <dbReference type="EC" id="4.98.1.1"/>
    </reaction>
</comment>
<comment type="pathway">
    <text evidence="14">Porphyrin-containing compound metabolism; protoheme biosynthesis; protoheme from protoporphyrin-IX: step 1/1.</text>
</comment>
<comment type="subcellular location">
    <subcellularLocation>
        <location evidence="7">Plastid</location>
        <location evidence="7">Chloroplast membrane</location>
        <topology evidence="16">Peripheral membrane protein</topology>
    </subcellularLocation>
    <subcellularLocation>
        <location evidence="7">Plastid</location>
        <location evidence="7">Chloroplast thylakoid membrane</location>
        <topology evidence="16">Peripheral membrane protein</topology>
    </subcellularLocation>
    <subcellularLocation>
        <location evidence="8">Mitochondrion</location>
    </subcellularLocation>
    <text evidence="15 17">(PubMed:9346891) describes experimental in vitro import of FC1 into mitochondria isolated from pea. However, (PubMed:11602264) shows experimental evidences that FC1 is not present in Arabidopsis mitochondria in vivo.</text>
</comment>
<comment type="tissue specificity">
    <text evidence="3 4">Expressed in roots, leaves, stems and flowers (PubMed:12374307). Present in both leaves and roots (PubMed:17416636).</text>
</comment>
<comment type="induction">
    <text evidence="3 4">Induced by sucrose, wounding, oxidative stress, salicylic acid, and during hypersensitive response to TMV infection (PubMed:12374307). Up-regulated by wounding and reactive oxygen species. Not regulated by methyl jasmonate.</text>
</comment>
<comment type="disruption phenotype">
    <text evidence="4">No visible phenotype, but decreased heme content in roots.</text>
</comment>
<comment type="similarity">
    <text evidence="14">Belongs to the ferrochelatase family.</text>
</comment>
<accession>P42043</accession>
<accession>C0Z2M8</accession>
<accession>Q0WW90</accession>
<gene>
    <name evidence="11" type="primary">FC1</name>
    <name evidence="13" type="synonym">FC-I</name>
    <name evidence="12" type="synonym">HEM15</name>
    <name type="ordered locus">At5g26030</name>
    <name type="ORF">T1N24.17</name>
</gene>